<dbReference type="EMBL" id="AE014297">
    <property type="protein sequence ID" value="AAF51987.1"/>
    <property type="molecule type" value="Genomic_DNA"/>
</dbReference>
<dbReference type="EMBL" id="AY051640">
    <property type="protein sequence ID" value="AAK93064.1"/>
    <property type="molecule type" value="mRNA"/>
</dbReference>
<dbReference type="RefSeq" id="NP_649560.1">
    <property type="nucleotide sequence ID" value="NM_141303.3"/>
</dbReference>
<dbReference type="PDB" id="4V6W">
    <property type="method" value="EM"/>
    <property type="resolution" value="6.00 A"/>
    <property type="chains" value="CO=1-205"/>
</dbReference>
<dbReference type="PDB" id="6XU6">
    <property type="method" value="EM"/>
    <property type="resolution" value="3.50 A"/>
    <property type="chains" value="CO=1-205"/>
</dbReference>
<dbReference type="PDB" id="6XU7">
    <property type="method" value="EM"/>
    <property type="resolution" value="4.90 A"/>
    <property type="chains" value="CO=1-205"/>
</dbReference>
<dbReference type="PDB" id="6XU8">
    <property type="method" value="EM"/>
    <property type="resolution" value="3.00 A"/>
    <property type="chains" value="CO=1-205"/>
</dbReference>
<dbReference type="PDBsum" id="4V6W"/>
<dbReference type="PDBsum" id="6XU6"/>
<dbReference type="PDBsum" id="6XU7"/>
<dbReference type="PDBsum" id="6XU8"/>
<dbReference type="EMDB" id="EMD-10622"/>
<dbReference type="EMDB" id="EMD-10623"/>
<dbReference type="EMDB" id="EMD-10624"/>
<dbReference type="SMR" id="Q9VNE9"/>
<dbReference type="BioGRID" id="65893">
    <property type="interactions" value="114"/>
</dbReference>
<dbReference type="DIP" id="DIP-19002N"/>
<dbReference type="FunCoup" id="Q9VNE9">
    <property type="interactions" value="1119"/>
</dbReference>
<dbReference type="IntAct" id="Q9VNE9">
    <property type="interactions" value="9"/>
</dbReference>
<dbReference type="MINT" id="Q9VNE9"/>
<dbReference type="STRING" id="7227.FBpp0078354"/>
<dbReference type="PaxDb" id="7227-FBpp0078354"/>
<dbReference type="DNASU" id="40687"/>
<dbReference type="EnsemblMetazoa" id="FBtr0078705">
    <property type="protein sequence ID" value="FBpp0078354"/>
    <property type="gene ID" value="FBgn0037351"/>
</dbReference>
<dbReference type="GeneID" id="40687"/>
<dbReference type="KEGG" id="dme:Dmel_CG1475"/>
<dbReference type="AGR" id="FB:FBgn0037351"/>
<dbReference type="CTD" id="23521"/>
<dbReference type="FlyBase" id="FBgn0037351">
    <property type="gene designation" value="RpL13A"/>
</dbReference>
<dbReference type="VEuPathDB" id="VectorBase:FBgn0037351"/>
<dbReference type="eggNOG" id="KOG3204">
    <property type="taxonomic scope" value="Eukaryota"/>
</dbReference>
<dbReference type="GeneTree" id="ENSGT00390000010799"/>
<dbReference type="HOGENOM" id="CLU_076922_0_0_1"/>
<dbReference type="InParanoid" id="Q9VNE9"/>
<dbReference type="OMA" id="GMLPWKT"/>
<dbReference type="OrthoDB" id="1882297at2759"/>
<dbReference type="PhylomeDB" id="Q9VNE9"/>
<dbReference type="Reactome" id="R-DME-156827">
    <property type="pathway name" value="L13a-mediated translational silencing of Ceruloplasmin expression"/>
</dbReference>
<dbReference type="Reactome" id="R-DME-1799339">
    <property type="pathway name" value="SRP-dependent cotranslational protein targeting to membrane"/>
</dbReference>
<dbReference type="Reactome" id="R-DME-72689">
    <property type="pathway name" value="Formation of a pool of free 40S subunits"/>
</dbReference>
<dbReference type="Reactome" id="R-DME-72706">
    <property type="pathway name" value="GTP hydrolysis and joining of the 60S ribosomal subunit"/>
</dbReference>
<dbReference type="Reactome" id="R-DME-975956">
    <property type="pathway name" value="Nonsense Mediated Decay (NMD) independent of the Exon Junction Complex (EJC)"/>
</dbReference>
<dbReference type="Reactome" id="R-DME-975957">
    <property type="pathway name" value="Nonsense Mediated Decay (NMD) enhanced by the Exon Junction Complex (EJC)"/>
</dbReference>
<dbReference type="SignaLink" id="Q9VNE9"/>
<dbReference type="BioGRID-ORCS" id="40687">
    <property type="hits" value="1 hit in 1 CRISPR screen"/>
</dbReference>
<dbReference type="ChiTaRS" id="RpL13A">
    <property type="organism name" value="fly"/>
</dbReference>
<dbReference type="GenomeRNAi" id="40687"/>
<dbReference type="PRO" id="PR:Q9VNE9"/>
<dbReference type="Proteomes" id="UP000000803">
    <property type="component" value="Chromosome 3R"/>
</dbReference>
<dbReference type="Bgee" id="FBgn0037351">
    <property type="expression patterns" value="Expressed in adult enteroendocrine precursor cell in adult midgut (Drosophila) and 293 other cell types or tissues"/>
</dbReference>
<dbReference type="ExpressionAtlas" id="Q9VNE9">
    <property type="expression patterns" value="baseline and differential"/>
</dbReference>
<dbReference type="GO" id="GO:0022625">
    <property type="term" value="C:cytosolic large ribosomal subunit"/>
    <property type="evidence" value="ECO:0000318"/>
    <property type="project" value="GO_Central"/>
</dbReference>
<dbReference type="GO" id="GO:0022626">
    <property type="term" value="C:cytosolic ribosome"/>
    <property type="evidence" value="ECO:0000314"/>
    <property type="project" value="FlyBase"/>
</dbReference>
<dbReference type="GO" id="GO:0005840">
    <property type="term" value="C:ribosome"/>
    <property type="evidence" value="ECO:0000318"/>
    <property type="project" value="GO_Central"/>
</dbReference>
<dbReference type="GO" id="GO:0003729">
    <property type="term" value="F:mRNA binding"/>
    <property type="evidence" value="ECO:0000318"/>
    <property type="project" value="GO_Central"/>
</dbReference>
<dbReference type="GO" id="GO:0003735">
    <property type="term" value="F:structural constituent of ribosome"/>
    <property type="evidence" value="ECO:0000314"/>
    <property type="project" value="FlyBase"/>
</dbReference>
<dbReference type="GO" id="GO:0002181">
    <property type="term" value="P:cytoplasmic translation"/>
    <property type="evidence" value="ECO:0000304"/>
    <property type="project" value="FlyBase"/>
</dbReference>
<dbReference type="GO" id="GO:0017148">
    <property type="term" value="P:negative regulation of translation"/>
    <property type="evidence" value="ECO:0000318"/>
    <property type="project" value="GO_Central"/>
</dbReference>
<dbReference type="CDD" id="cd00392">
    <property type="entry name" value="Ribosomal_L13"/>
    <property type="match status" value="1"/>
</dbReference>
<dbReference type="FunFam" id="6.10.250.3250:FF:000001">
    <property type="entry name" value="60S ribosomal protein L13a"/>
    <property type="match status" value="1"/>
</dbReference>
<dbReference type="FunFam" id="3.90.1180.10:FF:000002">
    <property type="entry name" value="60S ribosomal protein L16"/>
    <property type="match status" value="1"/>
</dbReference>
<dbReference type="Gene3D" id="6.10.250.3250">
    <property type="match status" value="1"/>
</dbReference>
<dbReference type="Gene3D" id="3.90.1180.10">
    <property type="entry name" value="Ribosomal protein L13"/>
    <property type="match status" value="1"/>
</dbReference>
<dbReference type="HAMAP" id="MF_01366">
    <property type="entry name" value="Ribosomal_uL13"/>
    <property type="match status" value="1"/>
</dbReference>
<dbReference type="InterPro" id="IPR005822">
    <property type="entry name" value="Ribosomal_uL13"/>
</dbReference>
<dbReference type="InterPro" id="IPR023563">
    <property type="entry name" value="Ribosomal_uL13_CS"/>
</dbReference>
<dbReference type="InterPro" id="IPR005755">
    <property type="entry name" value="Ribosomal_uL13_euk/arc"/>
</dbReference>
<dbReference type="InterPro" id="IPR036899">
    <property type="entry name" value="Ribosomal_uL13_sf"/>
</dbReference>
<dbReference type="NCBIfam" id="TIGR01077">
    <property type="entry name" value="L13_A_E"/>
    <property type="match status" value="1"/>
</dbReference>
<dbReference type="PANTHER" id="PTHR11545:SF3">
    <property type="entry name" value="LARGE RIBOSOMAL SUBUNIT PROTEIN UL13"/>
    <property type="match status" value="1"/>
</dbReference>
<dbReference type="PANTHER" id="PTHR11545">
    <property type="entry name" value="RIBOSOMAL PROTEIN L13"/>
    <property type="match status" value="1"/>
</dbReference>
<dbReference type="Pfam" id="PF00572">
    <property type="entry name" value="Ribosomal_L13"/>
    <property type="match status" value="1"/>
</dbReference>
<dbReference type="SUPFAM" id="SSF52161">
    <property type="entry name" value="Ribosomal protein L13"/>
    <property type="match status" value="1"/>
</dbReference>
<dbReference type="PROSITE" id="PS00783">
    <property type="entry name" value="RIBOSOMAL_L13"/>
    <property type="match status" value="1"/>
</dbReference>
<organism>
    <name type="scientific">Drosophila melanogaster</name>
    <name type="common">Fruit fly</name>
    <dbReference type="NCBI Taxonomy" id="7227"/>
    <lineage>
        <taxon>Eukaryota</taxon>
        <taxon>Metazoa</taxon>
        <taxon>Ecdysozoa</taxon>
        <taxon>Arthropoda</taxon>
        <taxon>Hexapoda</taxon>
        <taxon>Insecta</taxon>
        <taxon>Pterygota</taxon>
        <taxon>Neoptera</taxon>
        <taxon>Endopterygota</taxon>
        <taxon>Diptera</taxon>
        <taxon>Brachycera</taxon>
        <taxon>Muscomorpha</taxon>
        <taxon>Ephydroidea</taxon>
        <taxon>Drosophilidae</taxon>
        <taxon>Drosophila</taxon>
        <taxon>Sophophora</taxon>
    </lineage>
</organism>
<evidence type="ECO:0000305" key="1"/>
<reference key="1">
    <citation type="journal article" date="2000" name="Science">
        <title>The genome sequence of Drosophila melanogaster.</title>
        <authorList>
            <person name="Adams M.D."/>
            <person name="Celniker S.E."/>
            <person name="Holt R.A."/>
            <person name="Evans C.A."/>
            <person name="Gocayne J.D."/>
            <person name="Amanatides P.G."/>
            <person name="Scherer S.E."/>
            <person name="Li P.W."/>
            <person name="Hoskins R.A."/>
            <person name="Galle R.F."/>
            <person name="George R.A."/>
            <person name="Lewis S.E."/>
            <person name="Richards S."/>
            <person name="Ashburner M."/>
            <person name="Henderson S.N."/>
            <person name="Sutton G.G."/>
            <person name="Wortman J.R."/>
            <person name="Yandell M.D."/>
            <person name="Zhang Q."/>
            <person name="Chen L.X."/>
            <person name="Brandon R.C."/>
            <person name="Rogers Y.-H.C."/>
            <person name="Blazej R.G."/>
            <person name="Champe M."/>
            <person name="Pfeiffer B.D."/>
            <person name="Wan K.H."/>
            <person name="Doyle C."/>
            <person name="Baxter E.G."/>
            <person name="Helt G."/>
            <person name="Nelson C.R."/>
            <person name="Miklos G.L.G."/>
            <person name="Abril J.F."/>
            <person name="Agbayani A."/>
            <person name="An H.-J."/>
            <person name="Andrews-Pfannkoch C."/>
            <person name="Baldwin D."/>
            <person name="Ballew R.M."/>
            <person name="Basu A."/>
            <person name="Baxendale J."/>
            <person name="Bayraktaroglu L."/>
            <person name="Beasley E.M."/>
            <person name="Beeson K.Y."/>
            <person name="Benos P.V."/>
            <person name="Berman B.P."/>
            <person name="Bhandari D."/>
            <person name="Bolshakov S."/>
            <person name="Borkova D."/>
            <person name="Botchan M.R."/>
            <person name="Bouck J."/>
            <person name="Brokstein P."/>
            <person name="Brottier P."/>
            <person name="Burtis K.C."/>
            <person name="Busam D.A."/>
            <person name="Butler H."/>
            <person name="Cadieu E."/>
            <person name="Center A."/>
            <person name="Chandra I."/>
            <person name="Cherry J.M."/>
            <person name="Cawley S."/>
            <person name="Dahlke C."/>
            <person name="Davenport L.B."/>
            <person name="Davies P."/>
            <person name="de Pablos B."/>
            <person name="Delcher A."/>
            <person name="Deng Z."/>
            <person name="Mays A.D."/>
            <person name="Dew I."/>
            <person name="Dietz S.M."/>
            <person name="Dodson K."/>
            <person name="Doup L.E."/>
            <person name="Downes M."/>
            <person name="Dugan-Rocha S."/>
            <person name="Dunkov B.C."/>
            <person name="Dunn P."/>
            <person name="Durbin K.J."/>
            <person name="Evangelista C.C."/>
            <person name="Ferraz C."/>
            <person name="Ferriera S."/>
            <person name="Fleischmann W."/>
            <person name="Fosler C."/>
            <person name="Gabrielian A.E."/>
            <person name="Garg N.S."/>
            <person name="Gelbart W.M."/>
            <person name="Glasser K."/>
            <person name="Glodek A."/>
            <person name="Gong F."/>
            <person name="Gorrell J.H."/>
            <person name="Gu Z."/>
            <person name="Guan P."/>
            <person name="Harris M."/>
            <person name="Harris N.L."/>
            <person name="Harvey D.A."/>
            <person name="Heiman T.J."/>
            <person name="Hernandez J.R."/>
            <person name="Houck J."/>
            <person name="Hostin D."/>
            <person name="Houston K.A."/>
            <person name="Howland T.J."/>
            <person name="Wei M.-H."/>
            <person name="Ibegwam C."/>
            <person name="Jalali M."/>
            <person name="Kalush F."/>
            <person name="Karpen G.H."/>
            <person name="Ke Z."/>
            <person name="Kennison J.A."/>
            <person name="Ketchum K.A."/>
            <person name="Kimmel B.E."/>
            <person name="Kodira C.D."/>
            <person name="Kraft C.L."/>
            <person name="Kravitz S."/>
            <person name="Kulp D."/>
            <person name="Lai Z."/>
            <person name="Lasko P."/>
            <person name="Lei Y."/>
            <person name="Levitsky A.A."/>
            <person name="Li J.H."/>
            <person name="Li Z."/>
            <person name="Liang Y."/>
            <person name="Lin X."/>
            <person name="Liu X."/>
            <person name="Mattei B."/>
            <person name="McIntosh T.C."/>
            <person name="McLeod M.P."/>
            <person name="McPherson D."/>
            <person name="Merkulov G."/>
            <person name="Milshina N.V."/>
            <person name="Mobarry C."/>
            <person name="Morris J."/>
            <person name="Moshrefi A."/>
            <person name="Mount S.M."/>
            <person name="Moy M."/>
            <person name="Murphy B."/>
            <person name="Murphy L."/>
            <person name="Muzny D.M."/>
            <person name="Nelson D.L."/>
            <person name="Nelson D.R."/>
            <person name="Nelson K.A."/>
            <person name="Nixon K."/>
            <person name="Nusskern D.R."/>
            <person name="Pacleb J.M."/>
            <person name="Palazzolo M."/>
            <person name="Pittman G.S."/>
            <person name="Pan S."/>
            <person name="Pollard J."/>
            <person name="Puri V."/>
            <person name="Reese M.G."/>
            <person name="Reinert K."/>
            <person name="Remington K."/>
            <person name="Saunders R.D.C."/>
            <person name="Scheeler F."/>
            <person name="Shen H."/>
            <person name="Shue B.C."/>
            <person name="Siden-Kiamos I."/>
            <person name="Simpson M."/>
            <person name="Skupski M.P."/>
            <person name="Smith T.J."/>
            <person name="Spier E."/>
            <person name="Spradling A.C."/>
            <person name="Stapleton M."/>
            <person name="Strong R."/>
            <person name="Sun E."/>
            <person name="Svirskas R."/>
            <person name="Tector C."/>
            <person name="Turner R."/>
            <person name="Venter E."/>
            <person name="Wang A.H."/>
            <person name="Wang X."/>
            <person name="Wang Z.-Y."/>
            <person name="Wassarman D.A."/>
            <person name="Weinstock G.M."/>
            <person name="Weissenbach J."/>
            <person name="Williams S.M."/>
            <person name="Woodage T."/>
            <person name="Worley K.C."/>
            <person name="Wu D."/>
            <person name="Yang S."/>
            <person name="Yao Q.A."/>
            <person name="Ye J."/>
            <person name="Yeh R.-F."/>
            <person name="Zaveri J.S."/>
            <person name="Zhan M."/>
            <person name="Zhang G."/>
            <person name="Zhao Q."/>
            <person name="Zheng L."/>
            <person name="Zheng X.H."/>
            <person name="Zhong F.N."/>
            <person name="Zhong W."/>
            <person name="Zhou X."/>
            <person name="Zhu S.C."/>
            <person name="Zhu X."/>
            <person name="Smith H.O."/>
            <person name="Gibbs R.A."/>
            <person name="Myers E.W."/>
            <person name="Rubin G.M."/>
            <person name="Venter J.C."/>
        </authorList>
    </citation>
    <scope>NUCLEOTIDE SEQUENCE [LARGE SCALE GENOMIC DNA]</scope>
    <source>
        <strain>Berkeley</strain>
    </source>
</reference>
<reference key="2">
    <citation type="journal article" date="2002" name="Genome Biol.">
        <title>Annotation of the Drosophila melanogaster euchromatic genome: a systematic review.</title>
        <authorList>
            <person name="Misra S."/>
            <person name="Crosby M.A."/>
            <person name="Mungall C.J."/>
            <person name="Matthews B.B."/>
            <person name="Campbell K.S."/>
            <person name="Hradecky P."/>
            <person name="Huang Y."/>
            <person name="Kaminker J.S."/>
            <person name="Millburn G.H."/>
            <person name="Prochnik S.E."/>
            <person name="Smith C.D."/>
            <person name="Tupy J.L."/>
            <person name="Whitfield E.J."/>
            <person name="Bayraktaroglu L."/>
            <person name="Berman B.P."/>
            <person name="Bettencourt B.R."/>
            <person name="Celniker S.E."/>
            <person name="de Grey A.D.N.J."/>
            <person name="Drysdale R.A."/>
            <person name="Harris N.L."/>
            <person name="Richter J."/>
            <person name="Russo S."/>
            <person name="Schroeder A.J."/>
            <person name="Shu S.Q."/>
            <person name="Stapleton M."/>
            <person name="Yamada C."/>
            <person name="Ashburner M."/>
            <person name="Gelbart W.M."/>
            <person name="Rubin G.M."/>
            <person name="Lewis S.E."/>
        </authorList>
    </citation>
    <scope>GENOME REANNOTATION</scope>
    <source>
        <strain>Berkeley</strain>
    </source>
</reference>
<reference key="3">
    <citation type="journal article" date="2002" name="Genome Biol.">
        <title>A Drosophila full-length cDNA resource.</title>
        <authorList>
            <person name="Stapleton M."/>
            <person name="Carlson J.W."/>
            <person name="Brokstein P."/>
            <person name="Yu C."/>
            <person name="Champe M."/>
            <person name="George R.A."/>
            <person name="Guarin H."/>
            <person name="Kronmiller B."/>
            <person name="Pacleb J.M."/>
            <person name="Park S."/>
            <person name="Wan K.H."/>
            <person name="Rubin G.M."/>
            <person name="Celniker S.E."/>
        </authorList>
    </citation>
    <scope>NUCLEOTIDE SEQUENCE [LARGE SCALE MRNA]</scope>
    <source>
        <strain>Berkeley</strain>
        <tissue>Ovary</tissue>
    </source>
</reference>
<reference key="4">
    <citation type="journal article" date="2013" name="Nature">
        <title>Structures of the human and Drosophila 80S ribosome.</title>
        <authorList>
            <person name="Anger A.M."/>
            <person name="Armache J.P."/>
            <person name="Berninghausen O."/>
            <person name="Habeck M."/>
            <person name="Subklewe M."/>
            <person name="Wilson D.N."/>
            <person name="Beckmann R."/>
        </authorList>
    </citation>
    <scope>STRUCTURE BY ELECTRON MICROSCOPY (6.0 ANGSTROMS) OF THE 80S RIBOSOME</scope>
</reference>
<feature type="chain" id="PRO_0000133776" description="Large ribosomal subunit protein uL13">
    <location>
        <begin position="1"/>
        <end position="205"/>
    </location>
</feature>
<accession>Q9VNE9</accession>
<accession>Q9VNF0</accession>
<comment type="similarity">
    <text evidence="1">Belongs to the universal ribosomal protein uL13 family.</text>
</comment>
<name>RL13A_DROME</name>
<sequence>MTGLTNRTVVIDGRGHLLGRLASVVAKYLLQGGKVAVVRCEELNLSGHFYRNKIKFLAYLRKRCNVNPARGPFHFRAPSRIFYKAVRGMIPHKTKRGQAALARLRVFDGIPSPYDKRRRVVVPIAMRVLTLRSDRKYCQVGRLSHEVGWHYQDVIKSLERKRKAKLRVTLKHNRELKKLTVKARENIAKAAEPFNKIIKSYGYEV</sequence>
<keyword id="KW-0002">3D-structure</keyword>
<keyword id="KW-1185">Reference proteome</keyword>
<keyword id="KW-0687">Ribonucleoprotein</keyword>
<keyword id="KW-0689">Ribosomal protein</keyword>
<protein>
    <recommendedName>
        <fullName evidence="1">Large ribosomal subunit protein uL13</fullName>
    </recommendedName>
    <alternativeName>
        <fullName>60S ribosomal protein L13a</fullName>
    </alternativeName>
</protein>
<proteinExistence type="evidence at protein level"/>
<gene>
    <name type="primary">RpL13A</name>
    <name type="ORF">CG1475</name>
</gene>